<gene>
    <name type="primary">RDI1</name>
    <name type="ordered locus">YDL135C</name>
    <name type="ORF">D2175</name>
</gene>
<dbReference type="EMBL" id="D31630">
    <property type="protein sequence ID" value="BAA06499.1"/>
    <property type="molecule type" value="Genomic_DNA"/>
</dbReference>
<dbReference type="EMBL" id="X96876">
    <property type="protein sequence ID" value="CAA65624.1"/>
    <property type="molecule type" value="Genomic_DNA"/>
</dbReference>
<dbReference type="EMBL" id="Z74183">
    <property type="protein sequence ID" value="CAA98708.1"/>
    <property type="molecule type" value="Genomic_DNA"/>
</dbReference>
<dbReference type="EMBL" id="AY558165">
    <property type="protein sequence ID" value="AAS56491.1"/>
    <property type="molecule type" value="Genomic_DNA"/>
</dbReference>
<dbReference type="EMBL" id="BK006938">
    <property type="protein sequence ID" value="DAA11723.1"/>
    <property type="molecule type" value="Genomic_DNA"/>
</dbReference>
<dbReference type="PIR" id="A53646">
    <property type="entry name" value="A53646"/>
</dbReference>
<dbReference type="RefSeq" id="NP_010146.1">
    <property type="nucleotide sequence ID" value="NM_001180195.1"/>
</dbReference>
<dbReference type="SMR" id="Q12434"/>
<dbReference type="BioGRID" id="31926">
    <property type="interactions" value="186"/>
</dbReference>
<dbReference type="DIP" id="DIP-1231N"/>
<dbReference type="FunCoup" id="Q12434">
    <property type="interactions" value="553"/>
</dbReference>
<dbReference type="IntAct" id="Q12434">
    <property type="interactions" value="4"/>
</dbReference>
<dbReference type="MINT" id="Q12434"/>
<dbReference type="STRING" id="4932.YDL135C"/>
<dbReference type="iPTMnet" id="Q12434"/>
<dbReference type="PaxDb" id="4932-YDL135C"/>
<dbReference type="PeptideAtlas" id="Q12434"/>
<dbReference type="EnsemblFungi" id="YDL135C_mRNA">
    <property type="protein sequence ID" value="YDL135C"/>
    <property type="gene ID" value="YDL135C"/>
</dbReference>
<dbReference type="GeneID" id="851420"/>
<dbReference type="KEGG" id="sce:YDL135C"/>
<dbReference type="AGR" id="SGD:S000002294"/>
<dbReference type="SGD" id="S000002294">
    <property type="gene designation" value="RDI1"/>
</dbReference>
<dbReference type="VEuPathDB" id="FungiDB:YDL135C"/>
<dbReference type="eggNOG" id="KOG3205">
    <property type="taxonomic scope" value="Eukaryota"/>
</dbReference>
<dbReference type="GeneTree" id="ENSGT00390000006233"/>
<dbReference type="HOGENOM" id="CLU_076228_1_0_1"/>
<dbReference type="InParanoid" id="Q12434"/>
<dbReference type="OMA" id="YKPTAAK"/>
<dbReference type="OrthoDB" id="1683373at2759"/>
<dbReference type="BioCyc" id="YEAST:G3O-29534-MONOMER"/>
<dbReference type="Reactome" id="R-SCE-8980692">
    <property type="pathway name" value="RHOA GTPase cycle"/>
</dbReference>
<dbReference type="Reactome" id="R-SCE-9013026">
    <property type="pathway name" value="RHOB GTPase cycle"/>
</dbReference>
<dbReference type="Reactome" id="R-SCE-9013106">
    <property type="pathway name" value="RHOC GTPase cycle"/>
</dbReference>
<dbReference type="Reactome" id="R-SCE-9013148">
    <property type="pathway name" value="CDC42 GTPase cycle"/>
</dbReference>
<dbReference type="BioGRID-ORCS" id="851420">
    <property type="hits" value="4 hits in 10 CRISPR screens"/>
</dbReference>
<dbReference type="PRO" id="PR:Q12434"/>
<dbReference type="Proteomes" id="UP000002311">
    <property type="component" value="Chromosome IV"/>
</dbReference>
<dbReference type="RNAct" id="Q12434">
    <property type="molecule type" value="protein"/>
</dbReference>
<dbReference type="GO" id="GO:0005935">
    <property type="term" value="C:cellular bud neck"/>
    <property type="evidence" value="ECO:0000314"/>
    <property type="project" value="SGD"/>
</dbReference>
<dbReference type="GO" id="GO:0005934">
    <property type="term" value="C:cellular bud tip"/>
    <property type="evidence" value="ECO:0000314"/>
    <property type="project" value="SGD"/>
</dbReference>
<dbReference type="GO" id="GO:0005829">
    <property type="term" value="C:cytosol"/>
    <property type="evidence" value="ECO:0000314"/>
    <property type="project" value="SGD"/>
</dbReference>
<dbReference type="GO" id="GO:0016020">
    <property type="term" value="C:membrane"/>
    <property type="evidence" value="ECO:0000318"/>
    <property type="project" value="GO_Central"/>
</dbReference>
<dbReference type="GO" id="GO:0005886">
    <property type="term" value="C:plasma membrane"/>
    <property type="evidence" value="ECO:0007005"/>
    <property type="project" value="SGD"/>
</dbReference>
<dbReference type="GO" id="GO:0005096">
    <property type="term" value="F:GTPase activator activity"/>
    <property type="evidence" value="ECO:0007669"/>
    <property type="project" value="UniProtKB-KW"/>
</dbReference>
<dbReference type="GO" id="GO:0005094">
    <property type="term" value="F:Rho GDP-dissociation inhibitor activity"/>
    <property type="evidence" value="ECO:0000314"/>
    <property type="project" value="SGD"/>
</dbReference>
<dbReference type="GO" id="GO:0007015">
    <property type="term" value="P:actin filament organization"/>
    <property type="evidence" value="ECO:0000314"/>
    <property type="project" value="SGD"/>
</dbReference>
<dbReference type="GO" id="GO:0032889">
    <property type="term" value="P:regulation of vacuole fusion, non-autophagic"/>
    <property type="evidence" value="ECO:0000314"/>
    <property type="project" value="SGD"/>
</dbReference>
<dbReference type="GO" id="GO:0007266">
    <property type="term" value="P:Rho protein signal transduction"/>
    <property type="evidence" value="ECO:0000353"/>
    <property type="project" value="SGD"/>
</dbReference>
<dbReference type="FunFam" id="2.70.50.30:FF:000001">
    <property type="entry name" value="Rho GDP-dissociation inhibitor 1"/>
    <property type="match status" value="1"/>
</dbReference>
<dbReference type="Gene3D" id="2.70.50.30">
    <property type="entry name" value="Coagulation Factor XIII, subunit A, domain 1"/>
    <property type="match status" value="1"/>
</dbReference>
<dbReference type="InterPro" id="IPR014756">
    <property type="entry name" value="Ig_E-set"/>
</dbReference>
<dbReference type="InterPro" id="IPR000406">
    <property type="entry name" value="Rho_GDI"/>
</dbReference>
<dbReference type="InterPro" id="IPR024792">
    <property type="entry name" value="RhoGDI_dom_sf"/>
</dbReference>
<dbReference type="PANTHER" id="PTHR10980:SF3">
    <property type="entry name" value="LD16419P"/>
    <property type="match status" value="1"/>
</dbReference>
<dbReference type="PANTHER" id="PTHR10980">
    <property type="entry name" value="RHO GDP-DISSOCIATION INHIBITOR"/>
    <property type="match status" value="1"/>
</dbReference>
<dbReference type="Pfam" id="PF02115">
    <property type="entry name" value="Rho_GDI"/>
    <property type="match status" value="1"/>
</dbReference>
<dbReference type="PRINTS" id="PR00492">
    <property type="entry name" value="RHOGDI"/>
</dbReference>
<dbReference type="SUPFAM" id="SSF81296">
    <property type="entry name" value="E set domains"/>
    <property type="match status" value="1"/>
</dbReference>
<keyword id="KW-0007">Acetylation</keyword>
<keyword id="KW-0963">Cytoplasm</keyword>
<keyword id="KW-0343">GTPase activation</keyword>
<keyword id="KW-0597">Phosphoprotein</keyword>
<keyword id="KW-1185">Reference proteome</keyword>
<feature type="initiator methionine" description="Removed" evidence="7">
    <location>
        <position position="1"/>
    </location>
</feature>
<feature type="chain" id="PRO_0000219022" description="Rho GDP-dissociation inhibitor">
    <location>
        <begin position="2"/>
        <end position="202"/>
    </location>
</feature>
<feature type="modified residue" description="N-acetylalanine" evidence="7">
    <location>
        <position position="2"/>
    </location>
</feature>
<feature type="modified residue" description="Phosphothreonine" evidence="3 4 5 6">
    <location>
        <position position="27"/>
    </location>
</feature>
<feature type="modified residue" description="Phosphoserine" evidence="4 5 6">
    <location>
        <position position="40"/>
    </location>
</feature>
<proteinExistence type="evidence at protein level"/>
<sequence length="202" mass="23138">MAEESTDFSQFEEERNNDQYKVSAKKTVDEYKNLDAEDESLAKWKESLGLSSDVLPLEFPGDKRKVVVQKIQLLVNTEPNPITFDLTNEKTIKELASKRYKIKENSIYKLKIVFKVQHEIITGLRYVQYIKKAGIAVDKIDDHLGSYAPNTKTKPFYEVELPESEAPSGFLARGNYSAVSKFIDDDKTNHLTLNWGVEIVKK</sequence>
<reference key="1">
    <citation type="journal article" date="1994" name="J. Biol. Chem.">
        <title>Molecular cloning and characterization of yeast rho GDP dissociation inhibitor.</title>
        <authorList>
            <person name="Masuda T."/>
            <person name="Tanaka K."/>
            <person name="Nonaka H."/>
            <person name="Yamochi W."/>
            <person name="Maeda A."/>
            <person name="Takai Y."/>
        </authorList>
    </citation>
    <scope>NUCLEOTIDE SEQUENCE [GENOMIC DNA]</scope>
</reference>
<reference key="2">
    <citation type="journal article" date="1996" name="Yeast">
        <title>Analysis of a 26,756 bp segment from the left arm of yeast chromosome IV.</title>
        <authorList>
            <person name="Woelfl S."/>
            <person name="Haneman V."/>
            <person name="Saluz H.P."/>
        </authorList>
    </citation>
    <scope>NUCLEOTIDE SEQUENCE [GENOMIC DNA]</scope>
    <source>
        <strain>ATCC 96604 / S288c / FY1679</strain>
    </source>
</reference>
<reference key="3">
    <citation type="journal article" date="1997" name="Nature">
        <title>The nucleotide sequence of Saccharomyces cerevisiae chromosome IV.</title>
        <authorList>
            <person name="Jacq C."/>
            <person name="Alt-Moerbe J."/>
            <person name="Andre B."/>
            <person name="Arnold W."/>
            <person name="Bahr A."/>
            <person name="Ballesta J.P.G."/>
            <person name="Bargues M."/>
            <person name="Baron L."/>
            <person name="Becker A."/>
            <person name="Biteau N."/>
            <person name="Bloecker H."/>
            <person name="Blugeon C."/>
            <person name="Boskovic J."/>
            <person name="Brandt P."/>
            <person name="Brueckner M."/>
            <person name="Buitrago M.J."/>
            <person name="Coster F."/>
            <person name="Delaveau T."/>
            <person name="del Rey F."/>
            <person name="Dujon B."/>
            <person name="Eide L.G."/>
            <person name="Garcia-Cantalejo J.M."/>
            <person name="Goffeau A."/>
            <person name="Gomez-Peris A."/>
            <person name="Granotier C."/>
            <person name="Hanemann V."/>
            <person name="Hankeln T."/>
            <person name="Hoheisel J.D."/>
            <person name="Jaeger W."/>
            <person name="Jimenez A."/>
            <person name="Jonniaux J.-L."/>
            <person name="Kraemer C."/>
            <person name="Kuester H."/>
            <person name="Laamanen P."/>
            <person name="Legros Y."/>
            <person name="Louis E.J."/>
            <person name="Moeller-Rieker S."/>
            <person name="Monnet A."/>
            <person name="Moro M."/>
            <person name="Mueller-Auer S."/>
            <person name="Nussbaumer B."/>
            <person name="Paricio N."/>
            <person name="Paulin L."/>
            <person name="Perea J."/>
            <person name="Perez-Alonso M."/>
            <person name="Perez-Ortin J.E."/>
            <person name="Pohl T.M."/>
            <person name="Prydz H."/>
            <person name="Purnelle B."/>
            <person name="Rasmussen S.W."/>
            <person name="Remacha M.A."/>
            <person name="Revuelta J.L."/>
            <person name="Rieger M."/>
            <person name="Salom D."/>
            <person name="Saluz H.P."/>
            <person name="Saiz J.E."/>
            <person name="Saren A.-M."/>
            <person name="Schaefer M."/>
            <person name="Scharfe M."/>
            <person name="Schmidt E.R."/>
            <person name="Schneider C."/>
            <person name="Scholler P."/>
            <person name="Schwarz S."/>
            <person name="Soler-Mira A."/>
            <person name="Urrestarazu L.A."/>
            <person name="Verhasselt P."/>
            <person name="Vissers S."/>
            <person name="Voet M."/>
            <person name="Volckaert G."/>
            <person name="Wagner G."/>
            <person name="Wambutt R."/>
            <person name="Wedler E."/>
            <person name="Wedler H."/>
            <person name="Woelfl S."/>
            <person name="Harris D.E."/>
            <person name="Bowman S."/>
            <person name="Brown D."/>
            <person name="Churcher C.M."/>
            <person name="Connor R."/>
            <person name="Dedman K."/>
            <person name="Gentles S."/>
            <person name="Hamlin N."/>
            <person name="Hunt S."/>
            <person name="Jones L."/>
            <person name="McDonald S."/>
            <person name="Murphy L.D."/>
            <person name="Niblett D."/>
            <person name="Odell C."/>
            <person name="Oliver K."/>
            <person name="Rajandream M.A."/>
            <person name="Richards C."/>
            <person name="Shore L."/>
            <person name="Walsh S.V."/>
            <person name="Barrell B.G."/>
            <person name="Dietrich F.S."/>
            <person name="Mulligan J.T."/>
            <person name="Allen E."/>
            <person name="Araujo R."/>
            <person name="Aviles E."/>
            <person name="Berno A."/>
            <person name="Carpenter J."/>
            <person name="Chen E."/>
            <person name="Cherry J.M."/>
            <person name="Chung E."/>
            <person name="Duncan M."/>
            <person name="Hunicke-Smith S."/>
            <person name="Hyman R.W."/>
            <person name="Komp C."/>
            <person name="Lashkari D."/>
            <person name="Lew H."/>
            <person name="Lin D."/>
            <person name="Mosedale D."/>
            <person name="Nakahara K."/>
            <person name="Namath A."/>
            <person name="Oefner P."/>
            <person name="Oh C."/>
            <person name="Petel F.X."/>
            <person name="Roberts D."/>
            <person name="Schramm S."/>
            <person name="Schroeder M."/>
            <person name="Shogren T."/>
            <person name="Shroff N."/>
            <person name="Winant A."/>
            <person name="Yelton M.A."/>
            <person name="Botstein D."/>
            <person name="Davis R.W."/>
            <person name="Johnston M."/>
            <person name="Andrews S."/>
            <person name="Brinkman R."/>
            <person name="Cooper J."/>
            <person name="Ding H."/>
            <person name="Du Z."/>
            <person name="Favello A."/>
            <person name="Fulton L."/>
            <person name="Gattung S."/>
            <person name="Greco T."/>
            <person name="Hallsworth K."/>
            <person name="Hawkins J."/>
            <person name="Hillier L.W."/>
            <person name="Jier M."/>
            <person name="Johnson D."/>
            <person name="Johnston L."/>
            <person name="Kirsten J."/>
            <person name="Kucaba T."/>
            <person name="Langston Y."/>
            <person name="Latreille P."/>
            <person name="Le T."/>
            <person name="Mardis E."/>
            <person name="Menezes S."/>
            <person name="Miller N."/>
            <person name="Nhan M."/>
            <person name="Pauley A."/>
            <person name="Peluso D."/>
            <person name="Rifkin L."/>
            <person name="Riles L."/>
            <person name="Taich A."/>
            <person name="Trevaskis E."/>
            <person name="Vignati D."/>
            <person name="Wilcox L."/>
            <person name="Wohldman P."/>
            <person name="Vaudin M."/>
            <person name="Wilson R."/>
            <person name="Waterston R."/>
            <person name="Albermann K."/>
            <person name="Hani J."/>
            <person name="Heumann K."/>
            <person name="Kleine K."/>
            <person name="Mewes H.-W."/>
            <person name="Zollner A."/>
            <person name="Zaccaria P."/>
        </authorList>
    </citation>
    <scope>NUCLEOTIDE SEQUENCE [LARGE SCALE GENOMIC DNA]</scope>
    <source>
        <strain>ATCC 204508 / S288c</strain>
    </source>
</reference>
<reference key="4">
    <citation type="journal article" date="2014" name="G3 (Bethesda)">
        <title>The reference genome sequence of Saccharomyces cerevisiae: Then and now.</title>
        <authorList>
            <person name="Engel S.R."/>
            <person name="Dietrich F.S."/>
            <person name="Fisk D.G."/>
            <person name="Binkley G."/>
            <person name="Balakrishnan R."/>
            <person name="Costanzo M.C."/>
            <person name="Dwight S.S."/>
            <person name="Hitz B.C."/>
            <person name="Karra K."/>
            <person name="Nash R.S."/>
            <person name="Weng S."/>
            <person name="Wong E.D."/>
            <person name="Lloyd P."/>
            <person name="Skrzypek M.S."/>
            <person name="Miyasato S.R."/>
            <person name="Simison M."/>
            <person name="Cherry J.M."/>
        </authorList>
    </citation>
    <scope>GENOME REANNOTATION</scope>
    <source>
        <strain>ATCC 204508 / S288c</strain>
    </source>
</reference>
<reference key="5">
    <citation type="journal article" date="2007" name="Genome Res.">
        <title>Approaching a complete repository of sequence-verified protein-encoding clones for Saccharomyces cerevisiae.</title>
        <authorList>
            <person name="Hu Y."/>
            <person name="Rolfs A."/>
            <person name="Bhullar B."/>
            <person name="Murthy T.V.S."/>
            <person name="Zhu C."/>
            <person name="Berger M.F."/>
            <person name="Camargo A.A."/>
            <person name="Kelley F."/>
            <person name="McCarron S."/>
            <person name="Jepson D."/>
            <person name="Richardson A."/>
            <person name="Raphael J."/>
            <person name="Moreira D."/>
            <person name="Taycher E."/>
            <person name="Zuo D."/>
            <person name="Mohr S."/>
            <person name="Kane M.F."/>
            <person name="Williamson J."/>
            <person name="Simpson A.J.G."/>
            <person name="Bulyk M.L."/>
            <person name="Harlow E."/>
            <person name="Marsischky G."/>
            <person name="Kolodner R.D."/>
            <person name="LaBaer J."/>
        </authorList>
    </citation>
    <scope>NUCLEOTIDE SEQUENCE [GENOMIC DNA]</scope>
    <source>
        <strain>ATCC 204508 / S288c</strain>
    </source>
</reference>
<reference key="6">
    <citation type="journal article" date="2003" name="Nature">
        <title>Global analysis of protein expression in yeast.</title>
        <authorList>
            <person name="Ghaemmaghami S."/>
            <person name="Huh W.-K."/>
            <person name="Bower K."/>
            <person name="Howson R.W."/>
            <person name="Belle A."/>
            <person name="Dephoure N."/>
            <person name="O'Shea E.K."/>
            <person name="Weissman J.S."/>
        </authorList>
    </citation>
    <scope>LEVEL OF PROTEIN EXPRESSION [LARGE SCALE ANALYSIS]</scope>
</reference>
<reference key="7">
    <citation type="journal article" date="2007" name="J. Proteome Res.">
        <title>Large-scale phosphorylation analysis of alpha-factor-arrested Saccharomyces cerevisiae.</title>
        <authorList>
            <person name="Li X."/>
            <person name="Gerber S.A."/>
            <person name="Rudner A.D."/>
            <person name="Beausoleil S.A."/>
            <person name="Haas W."/>
            <person name="Villen J."/>
            <person name="Elias J.E."/>
            <person name="Gygi S.P."/>
        </authorList>
    </citation>
    <scope>PHOSPHORYLATION [LARGE SCALE ANALYSIS] AT THR-27 AND SER-40</scope>
    <scope>IDENTIFICATION BY MASS SPECTROMETRY [LARGE SCALE ANALYSIS]</scope>
    <source>
        <strain>ADR376</strain>
    </source>
</reference>
<reference key="8">
    <citation type="journal article" date="2007" name="Proc. Natl. Acad. Sci. U.S.A.">
        <title>Analysis of phosphorylation sites on proteins from Saccharomyces cerevisiae by electron transfer dissociation (ETD) mass spectrometry.</title>
        <authorList>
            <person name="Chi A."/>
            <person name="Huttenhower C."/>
            <person name="Geer L.Y."/>
            <person name="Coon J.J."/>
            <person name="Syka J.E.P."/>
            <person name="Bai D.L."/>
            <person name="Shabanowitz J."/>
            <person name="Burke D.J."/>
            <person name="Troyanskaya O.G."/>
            <person name="Hunt D.F."/>
        </authorList>
    </citation>
    <scope>PHOSPHORYLATION [LARGE SCALE ANALYSIS] AT THR-27</scope>
    <scope>IDENTIFICATION BY MASS SPECTROMETRY [LARGE SCALE ANALYSIS]</scope>
</reference>
<reference key="9">
    <citation type="journal article" date="2008" name="Mol. Cell. Proteomics">
        <title>A multidimensional chromatography technology for in-depth phosphoproteome analysis.</title>
        <authorList>
            <person name="Albuquerque C.P."/>
            <person name="Smolka M.B."/>
            <person name="Payne S.H."/>
            <person name="Bafna V."/>
            <person name="Eng J."/>
            <person name="Zhou H."/>
        </authorList>
    </citation>
    <scope>PHOSPHORYLATION [LARGE SCALE ANALYSIS] AT THR-27 AND SER-40</scope>
    <scope>IDENTIFICATION BY MASS SPECTROMETRY [LARGE SCALE ANALYSIS]</scope>
</reference>
<reference key="10">
    <citation type="journal article" date="2009" name="Science">
        <title>Global analysis of Cdk1 substrate phosphorylation sites provides insights into evolution.</title>
        <authorList>
            <person name="Holt L.J."/>
            <person name="Tuch B.B."/>
            <person name="Villen J."/>
            <person name="Johnson A.D."/>
            <person name="Gygi S.P."/>
            <person name="Morgan D.O."/>
        </authorList>
    </citation>
    <scope>PHOSPHORYLATION [LARGE SCALE ANALYSIS] AT THR-27 AND SER-40</scope>
    <scope>IDENTIFICATION BY MASS SPECTROMETRY [LARGE SCALE ANALYSIS]</scope>
</reference>
<reference key="11">
    <citation type="journal article" date="2012" name="Proc. Natl. Acad. Sci. U.S.A.">
        <title>N-terminal acetylome analyses and functional insights of the N-terminal acetyltransferase NatB.</title>
        <authorList>
            <person name="Van Damme P."/>
            <person name="Lasa M."/>
            <person name="Polevoda B."/>
            <person name="Gazquez C."/>
            <person name="Elosegui-Artola A."/>
            <person name="Kim D.S."/>
            <person name="De Juan-Pardo E."/>
            <person name="Demeyer K."/>
            <person name="Hole K."/>
            <person name="Larrea E."/>
            <person name="Timmerman E."/>
            <person name="Prieto J."/>
            <person name="Arnesen T."/>
            <person name="Sherman F."/>
            <person name="Gevaert K."/>
            <person name="Aldabe R."/>
        </authorList>
    </citation>
    <scope>ACETYLATION [LARGE SCALE ANALYSIS] AT ALA-2</scope>
    <scope>CLEAVAGE OF INITIATOR METHIONINE [LARGE SCALE ANALYSIS]</scope>
    <scope>IDENTIFICATION BY MASS SPECTROMETRY [LARGE SCALE ANALYSIS]</scope>
</reference>
<protein>
    <recommendedName>
        <fullName>Rho GDP-dissociation inhibitor</fullName>
        <shortName>Rho GDI</shortName>
    </recommendedName>
</protein>
<name>GDIR_YEAST</name>
<accession>Q12434</accession>
<accession>D6VRL3</accession>
<organism>
    <name type="scientific">Saccharomyces cerevisiae (strain ATCC 204508 / S288c)</name>
    <name type="common">Baker's yeast</name>
    <dbReference type="NCBI Taxonomy" id="559292"/>
    <lineage>
        <taxon>Eukaryota</taxon>
        <taxon>Fungi</taxon>
        <taxon>Dikarya</taxon>
        <taxon>Ascomycota</taxon>
        <taxon>Saccharomycotina</taxon>
        <taxon>Saccharomycetes</taxon>
        <taxon>Saccharomycetales</taxon>
        <taxon>Saccharomycetaceae</taxon>
        <taxon>Saccharomyces</taxon>
    </lineage>
</organism>
<comment type="function">
    <text>Regulates the GDP/GTP exchange reaction of the Rho proteins by inhibiting the dissociation of GDP from them, and the subsequent binding of GTP to them.</text>
</comment>
<comment type="interaction">
    <interactant intactId="EBI-7525">
        <id>Q12434</id>
    </interactant>
    <interactant intactId="EBI-4274">
        <id>P19073</id>
        <label>CDC42</label>
    </interactant>
    <organismsDiffer>false</organismsDiffer>
    <experiments>3</experiments>
</comment>
<comment type="interaction">
    <interactant intactId="EBI-7525">
        <id>Q12434</id>
    </interactant>
    <interactant intactId="EBI-15121">
        <id>P06780</id>
        <label>RHO1</label>
    </interactant>
    <organismsDiffer>false</organismsDiffer>
    <experiments>2</experiments>
</comment>
<comment type="subcellular location">
    <subcellularLocation>
        <location>Cytoplasm</location>
    </subcellularLocation>
</comment>
<comment type="miscellaneous">
    <text evidence="1">Present with 1670 molecules/cell in log phase SD medium.</text>
</comment>
<comment type="similarity">
    <text evidence="2">Belongs to the Rho GDI family.</text>
</comment>
<evidence type="ECO:0000269" key="1">
    <source>
    </source>
</evidence>
<evidence type="ECO:0000305" key="2"/>
<evidence type="ECO:0007744" key="3">
    <source>
    </source>
</evidence>
<evidence type="ECO:0007744" key="4">
    <source>
    </source>
</evidence>
<evidence type="ECO:0007744" key="5">
    <source>
    </source>
</evidence>
<evidence type="ECO:0007744" key="6">
    <source>
    </source>
</evidence>
<evidence type="ECO:0007744" key="7">
    <source>
    </source>
</evidence>